<keyword id="KW-0150">Chloroplast</keyword>
<keyword id="KW-0934">Plastid</keyword>
<keyword id="KW-0687">Ribonucleoprotein</keyword>
<keyword id="KW-0689">Ribosomal protein</keyword>
<keyword id="KW-0694">RNA-binding</keyword>
<keyword id="KW-0699">rRNA-binding</keyword>
<accession>P36470</accession>
<protein>
    <recommendedName>
        <fullName evidence="3">Small ribosomal subunit protein uS4c</fullName>
    </recommendedName>
    <alternativeName>
        <fullName>30S ribosomal protein S4, chloroplastic</fullName>
    </alternativeName>
</protein>
<geneLocation type="chloroplast"/>
<dbReference type="EMBL" id="Z29255">
    <property type="protein sequence ID" value="CAA82454.1"/>
    <property type="molecule type" value="Genomic_DNA"/>
</dbReference>
<dbReference type="PIR" id="S41279">
    <property type="entry name" value="S41279"/>
</dbReference>
<dbReference type="SMR" id="P36470"/>
<dbReference type="GO" id="GO:0009507">
    <property type="term" value="C:chloroplast"/>
    <property type="evidence" value="ECO:0007669"/>
    <property type="project" value="UniProtKB-SubCell"/>
</dbReference>
<dbReference type="GO" id="GO:0015935">
    <property type="term" value="C:small ribosomal subunit"/>
    <property type="evidence" value="ECO:0007669"/>
    <property type="project" value="InterPro"/>
</dbReference>
<dbReference type="GO" id="GO:0019843">
    <property type="term" value="F:rRNA binding"/>
    <property type="evidence" value="ECO:0007669"/>
    <property type="project" value="UniProtKB-KW"/>
</dbReference>
<dbReference type="GO" id="GO:0003735">
    <property type="term" value="F:structural constituent of ribosome"/>
    <property type="evidence" value="ECO:0007669"/>
    <property type="project" value="InterPro"/>
</dbReference>
<dbReference type="GO" id="GO:0042274">
    <property type="term" value="P:ribosomal small subunit biogenesis"/>
    <property type="evidence" value="ECO:0007669"/>
    <property type="project" value="TreeGrafter"/>
</dbReference>
<dbReference type="GO" id="GO:0006412">
    <property type="term" value="P:translation"/>
    <property type="evidence" value="ECO:0007669"/>
    <property type="project" value="InterPro"/>
</dbReference>
<dbReference type="CDD" id="cd00165">
    <property type="entry name" value="S4"/>
    <property type="match status" value="1"/>
</dbReference>
<dbReference type="FunFam" id="1.10.1050.10:FF:000002">
    <property type="entry name" value="30S ribosomal protein S4, chloroplastic"/>
    <property type="match status" value="1"/>
</dbReference>
<dbReference type="FunFam" id="3.10.290.10:FF:000081">
    <property type="entry name" value="30S ribosomal protein S4, chloroplastic"/>
    <property type="match status" value="1"/>
</dbReference>
<dbReference type="Gene3D" id="1.10.1050.10">
    <property type="entry name" value="Ribosomal Protein S4 Delta 41, Chain A, domain 1"/>
    <property type="match status" value="1"/>
</dbReference>
<dbReference type="Gene3D" id="3.10.290.10">
    <property type="entry name" value="RNA-binding S4 domain"/>
    <property type="match status" value="1"/>
</dbReference>
<dbReference type="HAMAP" id="MF_01306_B">
    <property type="entry name" value="Ribosomal_uS4_B"/>
    <property type="match status" value="1"/>
</dbReference>
<dbReference type="InterPro" id="IPR022801">
    <property type="entry name" value="Ribosomal_uS4"/>
</dbReference>
<dbReference type="InterPro" id="IPR005709">
    <property type="entry name" value="Ribosomal_uS4_bac-type"/>
</dbReference>
<dbReference type="InterPro" id="IPR018079">
    <property type="entry name" value="Ribosomal_uS4_CS"/>
</dbReference>
<dbReference type="InterPro" id="IPR001912">
    <property type="entry name" value="Ribosomal_uS4_N"/>
</dbReference>
<dbReference type="InterPro" id="IPR002942">
    <property type="entry name" value="S4_RNA-bd"/>
</dbReference>
<dbReference type="InterPro" id="IPR036986">
    <property type="entry name" value="S4_RNA-bd_sf"/>
</dbReference>
<dbReference type="NCBIfam" id="NF003717">
    <property type="entry name" value="PRK05327.1"/>
    <property type="match status" value="1"/>
</dbReference>
<dbReference type="NCBIfam" id="TIGR01017">
    <property type="entry name" value="rpsD_bact"/>
    <property type="match status" value="1"/>
</dbReference>
<dbReference type="PANTHER" id="PTHR11831">
    <property type="entry name" value="30S 40S RIBOSOMAL PROTEIN"/>
    <property type="match status" value="1"/>
</dbReference>
<dbReference type="PANTHER" id="PTHR11831:SF4">
    <property type="entry name" value="SMALL RIBOSOMAL SUBUNIT PROTEIN US4M"/>
    <property type="match status" value="1"/>
</dbReference>
<dbReference type="Pfam" id="PF00163">
    <property type="entry name" value="Ribosomal_S4"/>
    <property type="match status" value="1"/>
</dbReference>
<dbReference type="Pfam" id="PF01479">
    <property type="entry name" value="S4"/>
    <property type="match status" value="1"/>
</dbReference>
<dbReference type="SMART" id="SM01390">
    <property type="entry name" value="Ribosomal_S4"/>
    <property type="match status" value="1"/>
</dbReference>
<dbReference type="SMART" id="SM00363">
    <property type="entry name" value="S4"/>
    <property type="match status" value="1"/>
</dbReference>
<dbReference type="SUPFAM" id="SSF55174">
    <property type="entry name" value="Alpha-L RNA-binding motif"/>
    <property type="match status" value="1"/>
</dbReference>
<dbReference type="PROSITE" id="PS00632">
    <property type="entry name" value="RIBOSOMAL_S4"/>
    <property type="match status" value="1"/>
</dbReference>
<dbReference type="PROSITE" id="PS50889">
    <property type="entry name" value="S4"/>
    <property type="match status" value="1"/>
</dbReference>
<comment type="function">
    <text evidence="1">One of the primary rRNA binding proteins, it binds directly to 16S rRNA where it nucleates assembly of the body of the 30S subunit.</text>
</comment>
<comment type="function">
    <text evidence="1">With S5 and S12 plays an important role in translational accuracy.</text>
</comment>
<comment type="subunit">
    <text evidence="1">Part of the 30S ribosomal subunit. Contacts protein S5. The interaction surface between S4 and S5 is involved in control of translational fidelity (By similarity).</text>
</comment>
<comment type="subcellular location">
    <subcellularLocation>
        <location>Plastid</location>
        <location>Chloroplast</location>
    </subcellularLocation>
</comment>
<comment type="similarity">
    <text evidence="3">Belongs to the universal ribosomal protein uS4 family.</text>
</comment>
<name>RR4_RHAHU</name>
<gene>
    <name type="primary">rps4</name>
</gene>
<evidence type="ECO:0000250" key="1"/>
<evidence type="ECO:0000256" key="2">
    <source>
        <dbReference type="SAM" id="MobiDB-lite"/>
    </source>
</evidence>
<evidence type="ECO:0000305" key="3"/>
<reference key="1">
    <citation type="journal article" date="1994" name="Plant Syst. Evol.">
        <title>The chloroplast gene rps4 as a tool for the study of Poaceae phylogeny.</title>
        <authorList>
            <person name="Nadot S."/>
            <person name="Bajon R."/>
            <person name="Lejeune B."/>
        </authorList>
        <dbReference type="AGRICOLA" id="IND20417698"/>
    </citation>
    <scope>NUCLEOTIDE SEQUENCE [GENOMIC DNA]</scope>
</reference>
<proteinExistence type="inferred from homology"/>
<organism>
    <name type="scientific">Rhapis humilis</name>
    <name type="common">Slender lady palm</name>
    <name type="synonym">Chamaerops excelsa var. humilior</name>
    <dbReference type="NCBI Taxonomy" id="29657"/>
    <lineage>
        <taxon>Eukaryota</taxon>
        <taxon>Viridiplantae</taxon>
        <taxon>Streptophyta</taxon>
        <taxon>Embryophyta</taxon>
        <taxon>Tracheophyta</taxon>
        <taxon>Spermatophyta</taxon>
        <taxon>Magnoliopsida</taxon>
        <taxon>Liliopsida</taxon>
        <taxon>Arecaceae</taxon>
        <taxon>Coryphoideae</taxon>
        <taxon>Livistoneae</taxon>
        <taxon>Rhapidineae</taxon>
        <taxon>Rhapis</taxon>
    </lineage>
</organism>
<sequence>MSRYRGPRFKKIRRLGTLPGLTSKRPKSGSDLKTQLRSGKRSQYRIRLEEKQKLRFHYGLTERQLVRYVHIAGKAKGSTGQVLLQLLEMRLDNILFRLGMASTIPRARQLVNHRHILVNGRIVDIPSYRCKPRDIITTKDKQRSKALIQNYIASPPPEELPKHLTIDSFQYKGLVNQIIDSKWIGLKINELLVVEY</sequence>
<feature type="chain" id="PRO_0000132659" description="Small ribosomal subunit protein uS4c">
    <location>
        <begin position="1"/>
        <end position="196" status="greater than"/>
    </location>
</feature>
<feature type="domain" description="S4 RNA-binding">
    <location>
        <begin position="89"/>
        <end position="150"/>
    </location>
</feature>
<feature type="region of interest" description="Disordered" evidence="2">
    <location>
        <begin position="16"/>
        <end position="36"/>
    </location>
</feature>
<feature type="non-terminal residue">
    <location>
        <position position="196"/>
    </location>
</feature>